<comment type="function">
    <text evidence="1">Component of the entry fusion complex (EFC), which consists of 11 proteins. During cell infection, this complex mediates entry of the virion core into the host cytoplasm by a two-step mechanism consisting of lipid mixing of the viral and cellular membranes and subsequent pore formation.</text>
</comment>
<comment type="subunit">
    <text evidence="1">Interacts with OPG099/L5. Component of the entry fusion complex (EFC) composed of OPG053, OPG076, OPG086, OPG094, OPG095, OPG099, OPG107, OPG143, OPG104, OPG147 and OPG155. Except for OPG095 and OPG053, each of the EFC proteins is required for assembly or stability of the complex.</text>
</comment>
<comment type="subcellular location">
    <subcellularLocation>
        <location evidence="1">Virion membrane</location>
        <topology evidence="1">Single-pass membrane protein</topology>
    </subcellularLocation>
    <text evidence="1">Component of the mature virion (MV) membrane.</text>
</comment>
<comment type="induction">
    <text evidence="1">Expressed in the late phase of the viral replicative cycle.</text>
</comment>
<comment type="PTM">
    <text evidence="1">Unglycosylated because produced in viral factories instead of the classic ER -Golgi route.</text>
</comment>
<comment type="similarity">
    <text evidence="3">Belongs to the orthopoxvirus OPG086 family.</text>
</comment>
<evidence type="ECO:0000250" key="1">
    <source>
        <dbReference type="UniProtKB" id="P68458"/>
    </source>
</evidence>
<evidence type="ECO:0000255" key="2"/>
<evidence type="ECO:0000305" key="3"/>
<reference key="1">
    <citation type="journal article" date="1993" name="Nature">
        <title>Potential virulence determinants in terminal regions of variola smallpox virus genome.</title>
        <authorList>
            <person name="Massung R.F."/>
            <person name="Esposito J.J."/>
            <person name="Liu L.I."/>
            <person name="Qi J."/>
            <person name="Utterback T.R."/>
            <person name="Knight J.C."/>
            <person name="Aubin L."/>
            <person name="Yuran T.E."/>
            <person name="Parsons J.M."/>
            <person name="Loparev V.N."/>
            <person name="Selivanov N.A."/>
            <person name="Cavallaro K.F."/>
            <person name="Kerlavage A.R."/>
            <person name="Mahy B.W.J."/>
            <person name="Venter J.C."/>
        </authorList>
    </citation>
    <scope>NUCLEOTIDE SEQUENCE [GENOMIC DNA]</scope>
    <source>
        <strain>Bangladesh-1975</strain>
    </source>
</reference>
<reference key="2">
    <citation type="submission" date="1995-12" db="EMBL/GenBank/DDBJ databases">
        <authorList>
            <person name="Shchelkunov S.N."/>
            <person name="Sosnovtsev S.V."/>
            <person name="Totmenin A.V."/>
            <person name="Resenchuk S.M."/>
            <person name="Blinov V.M."/>
            <person name="Sandakhchiev L.S."/>
        </authorList>
    </citation>
    <scope>NUCLEOTIDE SEQUENCE [GENOMIC DNA]</scope>
    <source>
        <strain>Garcia-1966</strain>
    </source>
</reference>
<organism>
    <name type="scientific">Variola virus</name>
    <dbReference type="NCBI Taxonomy" id="10255"/>
    <lineage>
        <taxon>Viruses</taxon>
        <taxon>Varidnaviria</taxon>
        <taxon>Bamfordvirae</taxon>
        <taxon>Nucleocytoviricota</taxon>
        <taxon>Pokkesviricetes</taxon>
        <taxon>Chitovirales</taxon>
        <taxon>Poxviridae</taxon>
        <taxon>Chordopoxvirinae</taxon>
        <taxon>Orthopoxvirus</taxon>
    </lineage>
</organism>
<protein>
    <recommendedName>
        <fullName>Entry-fusion complex protein OPG086</fullName>
        <shortName>EFC protein OPG086</shortName>
    </recommendedName>
    <alternativeName>
        <fullName>Protein G3</fullName>
    </alternativeName>
</protein>
<feature type="chain" id="PRO_0000448192" description="Entry-fusion complex protein OPG086">
    <location>
        <begin position="1"/>
        <end position="111"/>
    </location>
</feature>
<feature type="transmembrane region" description="Helical; Signal-anchor" evidence="2">
    <location>
        <begin position="1"/>
        <end position="21"/>
    </location>
</feature>
<feature type="topological domain" description="Virion surface" evidence="2">
    <location>
        <begin position="22"/>
        <end position="111"/>
    </location>
</feature>
<accession>P0DOM4</accession>
<accession>P32993</accession>
<gene>
    <name type="primary">OPG086</name>
    <name type="ORF">G3L</name>
</gene>
<proteinExistence type="inferred from homology"/>
<organismHost>
    <name type="scientific">Homo sapiens</name>
    <name type="common">Human</name>
    <dbReference type="NCBI Taxonomy" id="9606"/>
</organismHost>
<name>PG086_VARV</name>
<keyword id="KW-1169">Fusion of virus membrane with host cell membrane</keyword>
<keyword id="KW-1168">Fusion of virus membrane with host membrane</keyword>
<keyword id="KW-0426">Late protein</keyword>
<keyword id="KW-0472">Membrane</keyword>
<keyword id="KW-0735">Signal-anchor</keyword>
<keyword id="KW-0812">Transmembrane</keyword>
<keyword id="KW-1133">Transmembrane helix</keyword>
<keyword id="KW-0261">Viral envelope protein</keyword>
<keyword id="KW-1162">Viral penetration into host cytoplasm</keyword>
<keyword id="KW-0946">Virion</keyword>
<keyword id="KW-1160">Virus entry into host cell</keyword>
<sequence length="111" mass="12820">MASLLYFILFLLFVCISYYFTYYPTNKLQAAVMETDRENAIIIQRNDEIPTRTLDTAIFTDASTVASAQIYLYYNSNIGKIIMSLNGKKHTFNLYDDNDIRTLLPILLLSK</sequence>
<dbReference type="EMBL" id="L22579">
    <property type="protein sequence ID" value="AAA60812.1"/>
    <property type="molecule type" value="Genomic_DNA"/>
</dbReference>
<dbReference type="EMBL" id="X76267">
    <property type="protein sequence ID" value="CAA53870.1"/>
    <property type="molecule type" value="Genomic_DNA"/>
</dbReference>
<dbReference type="PIR" id="F72158">
    <property type="entry name" value="F72158"/>
</dbReference>
<dbReference type="PIR" id="T28502">
    <property type="entry name" value="T28502"/>
</dbReference>
<dbReference type="SMR" id="P0DOM4"/>
<dbReference type="KEGG" id="vg:1486430"/>
<dbReference type="Proteomes" id="UP000119805">
    <property type="component" value="Segment"/>
</dbReference>
<dbReference type="GO" id="GO:0016020">
    <property type="term" value="C:membrane"/>
    <property type="evidence" value="ECO:0007669"/>
    <property type="project" value="UniProtKB-KW"/>
</dbReference>
<dbReference type="GO" id="GO:0019031">
    <property type="term" value="C:viral envelope"/>
    <property type="evidence" value="ECO:0007669"/>
    <property type="project" value="UniProtKB-KW"/>
</dbReference>
<dbReference type="GO" id="GO:0055036">
    <property type="term" value="C:virion membrane"/>
    <property type="evidence" value="ECO:0007669"/>
    <property type="project" value="UniProtKB-SubCell"/>
</dbReference>
<dbReference type="GO" id="GO:0019064">
    <property type="term" value="P:fusion of virus membrane with host plasma membrane"/>
    <property type="evidence" value="ECO:0007669"/>
    <property type="project" value="UniProtKB-KW"/>
</dbReference>
<dbReference type="GO" id="GO:0046718">
    <property type="term" value="P:symbiont entry into host cell"/>
    <property type="evidence" value="ECO:0007669"/>
    <property type="project" value="UniProtKB-KW"/>
</dbReference>
<dbReference type="InterPro" id="IPR010367">
    <property type="entry name" value="Poxvirus_G3"/>
</dbReference>
<dbReference type="Pfam" id="PF06129">
    <property type="entry name" value="Chordopox_G3"/>
    <property type="match status" value="1"/>
</dbReference>